<reference key="1">
    <citation type="journal article" date="1995" name="Gene">
        <title>RAD51 homologues in Xenopus laevis: two distinct genes are highly expressed in ovary and testis.</title>
        <authorList>
            <person name="Maeshima K."/>
            <person name="Morimatsu K."/>
            <person name="Shinohara A."/>
            <person name="Horii T."/>
        </authorList>
    </citation>
    <scope>NUCLEOTIDE SEQUENCE [MRNA]</scope>
    <source>
        <tissue>Ovary</tissue>
    </source>
</reference>
<reference key="2">
    <citation type="submission" date="2005-11" db="EMBL/GenBank/DDBJ databases">
        <authorList>
            <consortium name="NIH - Xenopus Gene Collection (XGC) project"/>
        </authorList>
    </citation>
    <scope>NUCLEOTIDE SEQUENCE [LARGE SCALE MRNA]</scope>
    <source>
        <tissue>Embryo</tissue>
        <tissue>Testis</tissue>
    </source>
</reference>
<dbReference type="EMBL" id="D38488">
    <property type="protein sequence ID" value="BAA07500.1"/>
    <property type="molecule type" value="mRNA"/>
</dbReference>
<dbReference type="EMBL" id="BC046650">
    <property type="protein sequence ID" value="AAH46650.1"/>
    <property type="molecule type" value="mRNA"/>
</dbReference>
<dbReference type="EMBL" id="BC108486">
    <property type="protein sequence ID" value="AAI08487.1"/>
    <property type="molecule type" value="mRNA"/>
</dbReference>
<dbReference type="RefSeq" id="NP_001080559.1">
    <property type="nucleotide sequence ID" value="NM_001087090.1"/>
</dbReference>
<dbReference type="RefSeq" id="XP_018084142.1">
    <property type="nucleotide sequence ID" value="XM_018228653.1"/>
</dbReference>
<dbReference type="RefSeq" id="XP_018084143.1">
    <property type="nucleotide sequence ID" value="XM_018228654.1"/>
</dbReference>
<dbReference type="SMR" id="Q91917"/>
<dbReference type="BioGRID" id="98493">
    <property type="interactions" value="1"/>
</dbReference>
<dbReference type="DNASU" id="380251"/>
<dbReference type="GeneID" id="380251"/>
<dbReference type="KEGG" id="xla:380251"/>
<dbReference type="AGR" id="Xenbase:XB-GENE-6256559"/>
<dbReference type="CTD" id="380251"/>
<dbReference type="Xenbase" id="XB-GENE-6256559">
    <property type="gene designation" value="rad51.L"/>
</dbReference>
<dbReference type="OMA" id="RAYNSNH"/>
<dbReference type="OrthoDB" id="10251254at2759"/>
<dbReference type="Proteomes" id="UP000186698">
    <property type="component" value="Chromosome 8L"/>
</dbReference>
<dbReference type="Bgee" id="380251">
    <property type="expression patterns" value="Expressed in ovary and 16 other cell types or tissues"/>
</dbReference>
<dbReference type="GO" id="GO:0005694">
    <property type="term" value="C:chromosome"/>
    <property type="evidence" value="ECO:0000250"/>
    <property type="project" value="UniProtKB"/>
</dbReference>
<dbReference type="GO" id="GO:0000794">
    <property type="term" value="C:condensed nuclear chromosome"/>
    <property type="evidence" value="ECO:0000318"/>
    <property type="project" value="GO_Central"/>
</dbReference>
<dbReference type="GO" id="GO:0005737">
    <property type="term" value="C:cytoplasm"/>
    <property type="evidence" value="ECO:0000250"/>
    <property type="project" value="UniProtKB"/>
</dbReference>
<dbReference type="GO" id="GO:0000228">
    <property type="term" value="C:nuclear chromosome"/>
    <property type="evidence" value="ECO:0000250"/>
    <property type="project" value="UniProtKB"/>
</dbReference>
<dbReference type="GO" id="GO:0005634">
    <property type="term" value="C:nucleus"/>
    <property type="evidence" value="ECO:0000250"/>
    <property type="project" value="UniProtKB"/>
</dbReference>
<dbReference type="GO" id="GO:0005524">
    <property type="term" value="F:ATP binding"/>
    <property type="evidence" value="ECO:0007669"/>
    <property type="project" value="UniProtKB-KW"/>
</dbReference>
<dbReference type="GO" id="GO:0016887">
    <property type="term" value="F:ATP hydrolysis activity"/>
    <property type="evidence" value="ECO:0007669"/>
    <property type="project" value="InterPro"/>
</dbReference>
<dbReference type="GO" id="GO:0008094">
    <property type="term" value="F:ATP-dependent activity, acting on DNA"/>
    <property type="evidence" value="ECO:0000318"/>
    <property type="project" value="GO_Central"/>
</dbReference>
<dbReference type="GO" id="GO:0140664">
    <property type="term" value="F:ATP-dependent DNA damage sensor activity"/>
    <property type="evidence" value="ECO:0007669"/>
    <property type="project" value="InterPro"/>
</dbReference>
<dbReference type="GO" id="GO:0000150">
    <property type="term" value="F:DNA strand exchange activity"/>
    <property type="evidence" value="ECO:0000318"/>
    <property type="project" value="GO_Central"/>
</dbReference>
<dbReference type="GO" id="GO:0003690">
    <property type="term" value="F:double-stranded DNA binding"/>
    <property type="evidence" value="ECO:0000250"/>
    <property type="project" value="UniProtKB"/>
</dbReference>
<dbReference type="GO" id="GO:0003697">
    <property type="term" value="F:single-stranded DNA binding"/>
    <property type="evidence" value="ECO:0000250"/>
    <property type="project" value="UniProtKB"/>
</dbReference>
<dbReference type="GO" id="GO:0017116">
    <property type="term" value="F:single-stranded DNA helicase activity"/>
    <property type="evidence" value="ECO:0000250"/>
    <property type="project" value="UniProtKB"/>
</dbReference>
<dbReference type="GO" id="GO:0070192">
    <property type="term" value="P:chromosome organization involved in meiotic cell cycle"/>
    <property type="evidence" value="ECO:0000318"/>
    <property type="project" value="GO_Central"/>
</dbReference>
<dbReference type="GO" id="GO:0006974">
    <property type="term" value="P:DNA damage response"/>
    <property type="evidence" value="ECO:0000250"/>
    <property type="project" value="UniProtKB"/>
</dbReference>
<dbReference type="GO" id="GO:0000730">
    <property type="term" value="P:DNA recombinase assembly"/>
    <property type="evidence" value="ECO:0000250"/>
    <property type="project" value="UniProtKB"/>
</dbReference>
<dbReference type="GO" id="GO:0042148">
    <property type="term" value="P:DNA strand invasion"/>
    <property type="evidence" value="ECO:0000318"/>
    <property type="project" value="GO_Central"/>
</dbReference>
<dbReference type="GO" id="GO:0000724">
    <property type="term" value="P:double-strand break repair via homologous recombination"/>
    <property type="evidence" value="ECO:0000250"/>
    <property type="project" value="UniProtKB"/>
</dbReference>
<dbReference type="GO" id="GO:0006312">
    <property type="term" value="P:mitotic recombination"/>
    <property type="evidence" value="ECO:0000318"/>
    <property type="project" value="GO_Central"/>
</dbReference>
<dbReference type="GO" id="GO:1990426">
    <property type="term" value="P:mitotic recombination-dependent replication fork processing"/>
    <property type="evidence" value="ECO:0007669"/>
    <property type="project" value="InterPro"/>
</dbReference>
<dbReference type="GO" id="GO:0007131">
    <property type="term" value="P:reciprocal meiotic recombination"/>
    <property type="evidence" value="ECO:0000318"/>
    <property type="project" value="GO_Central"/>
</dbReference>
<dbReference type="CDD" id="cd19513">
    <property type="entry name" value="Rad51"/>
    <property type="match status" value="1"/>
</dbReference>
<dbReference type="FunFam" id="1.10.150.20:FF:000008">
    <property type="entry name" value="DNA repair protein RAD51 homolog"/>
    <property type="match status" value="1"/>
</dbReference>
<dbReference type="FunFam" id="3.40.50.300:FF:000092">
    <property type="entry name" value="DNA repair protein Rad51 homolog"/>
    <property type="match status" value="1"/>
</dbReference>
<dbReference type="Gene3D" id="1.10.150.20">
    <property type="entry name" value="5' to 3' exonuclease, C-terminal subdomain"/>
    <property type="match status" value="1"/>
</dbReference>
<dbReference type="Gene3D" id="3.40.50.300">
    <property type="entry name" value="P-loop containing nucleotide triphosphate hydrolases"/>
    <property type="match status" value="1"/>
</dbReference>
<dbReference type="InterPro" id="IPR003593">
    <property type="entry name" value="AAA+_ATPase"/>
</dbReference>
<dbReference type="InterPro" id="IPR011941">
    <property type="entry name" value="DNA_recomb/repair_Rad51"/>
</dbReference>
<dbReference type="InterPro" id="IPR013632">
    <property type="entry name" value="DNA_recomb/repair_Rad51_C"/>
</dbReference>
<dbReference type="InterPro" id="IPR016467">
    <property type="entry name" value="DNA_recomb/repair_RecA-like"/>
</dbReference>
<dbReference type="InterPro" id="IPR010995">
    <property type="entry name" value="DNA_repair_Rad51/TF_NusA_a-hlx"/>
</dbReference>
<dbReference type="InterPro" id="IPR027417">
    <property type="entry name" value="P-loop_NTPase"/>
</dbReference>
<dbReference type="InterPro" id="IPR020588">
    <property type="entry name" value="RecA_ATP-bd"/>
</dbReference>
<dbReference type="InterPro" id="IPR020587">
    <property type="entry name" value="RecA_monomer-monomer_interface"/>
</dbReference>
<dbReference type="NCBIfam" id="NF003301">
    <property type="entry name" value="PRK04301.1"/>
    <property type="match status" value="1"/>
</dbReference>
<dbReference type="NCBIfam" id="TIGR02239">
    <property type="entry name" value="recomb_RAD51"/>
    <property type="match status" value="1"/>
</dbReference>
<dbReference type="PANTHER" id="PTHR22942:SF39">
    <property type="entry name" value="DNA REPAIR PROTEIN RAD51 HOMOLOG 1"/>
    <property type="match status" value="1"/>
</dbReference>
<dbReference type="PANTHER" id="PTHR22942">
    <property type="entry name" value="RECA/RAD51/RADA DNA STRAND-PAIRING FAMILY MEMBER"/>
    <property type="match status" value="1"/>
</dbReference>
<dbReference type="Pfam" id="PF14520">
    <property type="entry name" value="HHH_5"/>
    <property type="match status" value="1"/>
</dbReference>
<dbReference type="Pfam" id="PF08423">
    <property type="entry name" value="Rad51"/>
    <property type="match status" value="1"/>
</dbReference>
<dbReference type="PIRSF" id="PIRSF005856">
    <property type="entry name" value="Rad51"/>
    <property type="match status" value="1"/>
</dbReference>
<dbReference type="SMART" id="SM00382">
    <property type="entry name" value="AAA"/>
    <property type="match status" value="1"/>
</dbReference>
<dbReference type="SUPFAM" id="SSF52540">
    <property type="entry name" value="P-loop containing nucleoside triphosphate hydrolases"/>
    <property type="match status" value="1"/>
</dbReference>
<dbReference type="SUPFAM" id="SSF47794">
    <property type="entry name" value="Rad51 N-terminal domain-like"/>
    <property type="match status" value="1"/>
</dbReference>
<dbReference type="PROSITE" id="PS50162">
    <property type="entry name" value="RECA_2"/>
    <property type="match status" value="1"/>
</dbReference>
<dbReference type="PROSITE" id="PS50163">
    <property type="entry name" value="RECA_3"/>
    <property type="match status" value="1"/>
</dbReference>
<sequence>MAMQAHYQAEATEEENFGPQAITRLEQCGINANDVKKLEDAGFHTVEAVAYAPKKELLNIKGISEAKAEKILAEAAKLVPMGFTTATEFHQRRSEIIQIGTGSKELDKLLQGGIETGSITEMFGEFRTGKTQLCHTLAVTCQLPIDRGGGEGKAMYIDTEGTFRPERLLAVAERYGLSGSDVLDNVAYARAFNTDHQTQLLYQASAMMAESRYALLIVDSATALYRTDYSGRGELSARQMHLARFLRMLLRLADEFGVAVVITNQVVAQVDGAAMFAADPKKPIGGNIIAHASTTRLYLRKGRGETRICKIYDSPCLPEAEAMFAINADGVGDAKD</sequence>
<feature type="chain" id="PRO_0000122937" description="DNA repair protein RAD51 homolog B">
    <location>
        <begin position="1"/>
        <end position="336"/>
    </location>
</feature>
<feature type="domain" description="HhH">
    <location>
        <begin position="45"/>
        <end position="74"/>
    </location>
</feature>
<feature type="short sequence motif" description="Nuclear export signal" evidence="1">
    <location>
        <begin position="242"/>
        <end position="257"/>
    </location>
</feature>
<feature type="binding site" evidence="2">
    <location>
        <begin position="124"/>
        <end position="131"/>
    </location>
    <ligand>
        <name>ATP</name>
        <dbReference type="ChEBI" id="CHEBI:30616"/>
    </ligand>
</feature>
<accession>Q91917</accession>
<accession>Q5D0A9</accession>
<protein>
    <recommendedName>
        <fullName>DNA repair protein RAD51 homolog B</fullName>
        <shortName>xRAD51.2</shortName>
    </recommendedName>
</protein>
<keyword id="KW-0067">ATP-binding</keyword>
<keyword id="KW-0158">Chromosome</keyword>
<keyword id="KW-0963">Cytoplasm</keyword>
<keyword id="KW-0238">DNA-binding</keyword>
<keyword id="KW-0547">Nucleotide-binding</keyword>
<keyword id="KW-0539">Nucleus</keyword>
<keyword id="KW-1185">Reference proteome</keyword>
<name>RA51B_XENLA</name>
<gene>
    <name type="primary">rad51-b</name>
    <name type="synonym">rad51-2</name>
    <name type="synonym">rad51.2</name>
</gene>
<organism>
    <name type="scientific">Xenopus laevis</name>
    <name type="common">African clawed frog</name>
    <dbReference type="NCBI Taxonomy" id="8355"/>
    <lineage>
        <taxon>Eukaryota</taxon>
        <taxon>Metazoa</taxon>
        <taxon>Chordata</taxon>
        <taxon>Craniata</taxon>
        <taxon>Vertebrata</taxon>
        <taxon>Euteleostomi</taxon>
        <taxon>Amphibia</taxon>
        <taxon>Batrachia</taxon>
        <taxon>Anura</taxon>
        <taxon>Pipoidea</taxon>
        <taxon>Pipidae</taxon>
        <taxon>Xenopodinae</taxon>
        <taxon>Xenopus</taxon>
        <taxon>Xenopus</taxon>
    </lineage>
</organism>
<evidence type="ECO:0000250" key="1">
    <source>
        <dbReference type="UniProtKB" id="Q06609"/>
    </source>
</evidence>
<evidence type="ECO:0000255" key="2"/>
<evidence type="ECO:0000305" key="3"/>
<proteinExistence type="evidence at transcript level"/>
<comment type="function">
    <text evidence="1">Plays an important role in homologous strand exchange, a key step in DNA repair through homologous recombination (HR). Binds to single-stranded DNA in an ATP-dependent manner to form nucleoprotein filaments which are essential for the homology search and strand exchange. Catalyzes the recognition of homology and strand exchange between homologous DNA partners to form a joint molecule between a processed DNA break and the repair template. Recruited to resolve stalled replication forks during replication stress. Also involved in interstrand cross-link repair.</text>
</comment>
<comment type="subunit">
    <text evidence="1">Forms linear homooligomers, giving rise to a RAD51 nucleoprotein filament, which is essential for strand-pairing reactions during DNA recombination.</text>
</comment>
<comment type="subcellular location">
    <subcellularLocation>
        <location evidence="1">Nucleus</location>
    </subcellularLocation>
    <subcellularLocation>
        <location evidence="1">Cytoplasm</location>
    </subcellularLocation>
    <subcellularLocation>
        <location evidence="1">Chromosome</location>
    </subcellularLocation>
    <text evidence="1">Accumulated at sites of DNA damage. Recruited to stalled replication forks during replication stress.</text>
</comment>
<comment type="similarity">
    <text evidence="3">Belongs to the RecA family. RAD51 subfamily.</text>
</comment>